<comment type="function">
    <text evidence="1">Catalyzes the acyloin condensation reaction between C atoms 2 and 3 of pyruvate and glyceraldehyde 3-phosphate to yield 1-deoxy-D-xylulose-5-phosphate (DXP).</text>
</comment>
<comment type="catalytic activity">
    <reaction evidence="1">
        <text>D-glyceraldehyde 3-phosphate + pyruvate + H(+) = 1-deoxy-D-xylulose 5-phosphate + CO2</text>
        <dbReference type="Rhea" id="RHEA:12605"/>
        <dbReference type="ChEBI" id="CHEBI:15361"/>
        <dbReference type="ChEBI" id="CHEBI:15378"/>
        <dbReference type="ChEBI" id="CHEBI:16526"/>
        <dbReference type="ChEBI" id="CHEBI:57792"/>
        <dbReference type="ChEBI" id="CHEBI:59776"/>
        <dbReference type="EC" id="2.2.1.7"/>
    </reaction>
</comment>
<comment type="cofactor">
    <cofactor evidence="1">
        <name>Mg(2+)</name>
        <dbReference type="ChEBI" id="CHEBI:18420"/>
    </cofactor>
    <text evidence="1">Binds 1 Mg(2+) ion per subunit.</text>
</comment>
<comment type="cofactor">
    <cofactor evidence="1">
        <name>thiamine diphosphate</name>
        <dbReference type="ChEBI" id="CHEBI:58937"/>
    </cofactor>
    <text evidence="1">Binds 1 thiamine pyrophosphate per subunit.</text>
</comment>
<comment type="pathway">
    <text evidence="1">Metabolic intermediate biosynthesis; 1-deoxy-D-xylulose 5-phosphate biosynthesis; 1-deoxy-D-xylulose 5-phosphate from D-glyceraldehyde 3-phosphate and pyruvate: step 1/1.</text>
</comment>
<comment type="subunit">
    <text evidence="1">Homodimer.</text>
</comment>
<comment type="similarity">
    <text evidence="1">Belongs to the transketolase family. DXPS subfamily.</text>
</comment>
<organism>
    <name type="scientific">Pseudomonas putida (strain ATCC 700007 / DSM 6899 / JCM 31910 / BCRC 17059 / LMG 24140 / F1)</name>
    <dbReference type="NCBI Taxonomy" id="351746"/>
    <lineage>
        <taxon>Bacteria</taxon>
        <taxon>Pseudomonadati</taxon>
        <taxon>Pseudomonadota</taxon>
        <taxon>Gammaproteobacteria</taxon>
        <taxon>Pseudomonadales</taxon>
        <taxon>Pseudomonadaceae</taxon>
        <taxon>Pseudomonas</taxon>
    </lineage>
</organism>
<sequence>MPTTFQEIPRERPVTPLLDRADTPAGLRRLAEADLETLADELRQELLYTVGQTGGHFGAGLGVIELTIALHYVFDTPDDRLVWDVGHQAYPHKILTGRRNRMLSLRQKDGIAAFPRRSESEYDTFGVGHSSTSISAALGMAIAARLQNSARKSIAVIGDGALTAGMAFEALNHAQEVNADMLVILNDNDMSISRNVGGLSNYLAKILSSRTYASMREGSKKVLSRLPGAWEIARRTEEYAKGMLVPGTLFEELGWNYIGPIDGHDLPTMIATLRNMRDLKGPQFLHVVTKKGKGFAPAEIDPIGYHAITKLEPADKPAAPKKASGPKYSAVFGQWLCDMAAADNRLVGITPAMKEGSDLVDFSERYPERYFDVAIAEQHAVTLAAGMACEGSKPVVAIYSTFLQRAYDQLIHDVAVQNLDVLFAIDRAGLVGEDGPTHAGSYDLSYLRCIPGMLVMTPSDENELRKMLSTGHLYNGPAAVRYPRGTGPNAPISGDLQPLEIGKGVVRRQGEKVALLVFGVQLAEAMQVAEQINATVVDMRFVKPLDEALVLELAGSHELLVTIEENAIMGGAGAAVGEFLASQAVLKPLLHLGLPDIYVEHAKPAQMLAECGLDAAGIEASVKARMVKLGL</sequence>
<accession>A5VXW9</accession>
<evidence type="ECO:0000255" key="1">
    <source>
        <dbReference type="HAMAP-Rule" id="MF_00315"/>
    </source>
</evidence>
<gene>
    <name evidence="1" type="primary">dxs</name>
    <name type="ordered locus">Pput_0561</name>
</gene>
<proteinExistence type="inferred from homology"/>
<keyword id="KW-0414">Isoprene biosynthesis</keyword>
<keyword id="KW-0460">Magnesium</keyword>
<keyword id="KW-0479">Metal-binding</keyword>
<keyword id="KW-0784">Thiamine biosynthesis</keyword>
<keyword id="KW-0786">Thiamine pyrophosphate</keyword>
<keyword id="KW-0808">Transferase</keyword>
<dbReference type="EC" id="2.2.1.7" evidence="1"/>
<dbReference type="EMBL" id="CP000712">
    <property type="protein sequence ID" value="ABQ76729.1"/>
    <property type="molecule type" value="Genomic_DNA"/>
</dbReference>
<dbReference type="SMR" id="A5VXW9"/>
<dbReference type="KEGG" id="ppf:Pput_0561"/>
<dbReference type="eggNOG" id="COG1154">
    <property type="taxonomic scope" value="Bacteria"/>
</dbReference>
<dbReference type="HOGENOM" id="CLU_009227_1_4_6"/>
<dbReference type="UniPathway" id="UPA00064">
    <property type="reaction ID" value="UER00091"/>
</dbReference>
<dbReference type="GO" id="GO:0005829">
    <property type="term" value="C:cytosol"/>
    <property type="evidence" value="ECO:0007669"/>
    <property type="project" value="TreeGrafter"/>
</dbReference>
<dbReference type="GO" id="GO:0008661">
    <property type="term" value="F:1-deoxy-D-xylulose-5-phosphate synthase activity"/>
    <property type="evidence" value="ECO:0007669"/>
    <property type="project" value="UniProtKB-UniRule"/>
</dbReference>
<dbReference type="GO" id="GO:0000287">
    <property type="term" value="F:magnesium ion binding"/>
    <property type="evidence" value="ECO:0007669"/>
    <property type="project" value="UniProtKB-UniRule"/>
</dbReference>
<dbReference type="GO" id="GO:0030976">
    <property type="term" value="F:thiamine pyrophosphate binding"/>
    <property type="evidence" value="ECO:0007669"/>
    <property type="project" value="UniProtKB-UniRule"/>
</dbReference>
<dbReference type="GO" id="GO:0052865">
    <property type="term" value="P:1-deoxy-D-xylulose 5-phosphate biosynthetic process"/>
    <property type="evidence" value="ECO:0007669"/>
    <property type="project" value="UniProtKB-UniPathway"/>
</dbReference>
<dbReference type="GO" id="GO:0019288">
    <property type="term" value="P:isopentenyl diphosphate biosynthetic process, methylerythritol 4-phosphate pathway"/>
    <property type="evidence" value="ECO:0007669"/>
    <property type="project" value="TreeGrafter"/>
</dbReference>
<dbReference type="GO" id="GO:0016114">
    <property type="term" value="P:terpenoid biosynthetic process"/>
    <property type="evidence" value="ECO:0007669"/>
    <property type="project" value="UniProtKB-UniRule"/>
</dbReference>
<dbReference type="GO" id="GO:0009228">
    <property type="term" value="P:thiamine biosynthetic process"/>
    <property type="evidence" value="ECO:0007669"/>
    <property type="project" value="UniProtKB-UniRule"/>
</dbReference>
<dbReference type="CDD" id="cd02007">
    <property type="entry name" value="TPP_DXS"/>
    <property type="match status" value="1"/>
</dbReference>
<dbReference type="CDD" id="cd07033">
    <property type="entry name" value="TPP_PYR_DXS_TK_like"/>
    <property type="match status" value="1"/>
</dbReference>
<dbReference type="FunFam" id="3.40.50.920:FF:000002">
    <property type="entry name" value="1-deoxy-D-xylulose-5-phosphate synthase"/>
    <property type="match status" value="1"/>
</dbReference>
<dbReference type="FunFam" id="3.40.50.970:FF:000005">
    <property type="entry name" value="1-deoxy-D-xylulose-5-phosphate synthase"/>
    <property type="match status" value="1"/>
</dbReference>
<dbReference type="Gene3D" id="3.40.50.920">
    <property type="match status" value="1"/>
</dbReference>
<dbReference type="Gene3D" id="3.40.50.970">
    <property type="match status" value="2"/>
</dbReference>
<dbReference type="HAMAP" id="MF_00315">
    <property type="entry name" value="DXP_synth"/>
    <property type="match status" value="1"/>
</dbReference>
<dbReference type="InterPro" id="IPR005477">
    <property type="entry name" value="Dxylulose-5-P_synthase"/>
</dbReference>
<dbReference type="InterPro" id="IPR029061">
    <property type="entry name" value="THDP-binding"/>
</dbReference>
<dbReference type="InterPro" id="IPR009014">
    <property type="entry name" value="Transketo_C/PFOR_II"/>
</dbReference>
<dbReference type="InterPro" id="IPR005475">
    <property type="entry name" value="Transketolase-like_Pyr-bd"/>
</dbReference>
<dbReference type="InterPro" id="IPR020826">
    <property type="entry name" value="Transketolase_BS"/>
</dbReference>
<dbReference type="InterPro" id="IPR033248">
    <property type="entry name" value="Transketolase_C"/>
</dbReference>
<dbReference type="NCBIfam" id="TIGR00204">
    <property type="entry name" value="dxs"/>
    <property type="match status" value="1"/>
</dbReference>
<dbReference type="NCBIfam" id="NF003933">
    <property type="entry name" value="PRK05444.2-2"/>
    <property type="match status" value="1"/>
</dbReference>
<dbReference type="PANTHER" id="PTHR43322">
    <property type="entry name" value="1-D-DEOXYXYLULOSE 5-PHOSPHATE SYNTHASE-RELATED"/>
    <property type="match status" value="1"/>
</dbReference>
<dbReference type="PANTHER" id="PTHR43322:SF5">
    <property type="entry name" value="1-DEOXY-D-XYLULOSE-5-PHOSPHATE SYNTHASE, CHLOROPLASTIC"/>
    <property type="match status" value="1"/>
</dbReference>
<dbReference type="Pfam" id="PF13292">
    <property type="entry name" value="DXP_synthase_N"/>
    <property type="match status" value="1"/>
</dbReference>
<dbReference type="Pfam" id="PF02779">
    <property type="entry name" value="Transket_pyr"/>
    <property type="match status" value="1"/>
</dbReference>
<dbReference type="Pfam" id="PF02780">
    <property type="entry name" value="Transketolase_C"/>
    <property type="match status" value="1"/>
</dbReference>
<dbReference type="SMART" id="SM00861">
    <property type="entry name" value="Transket_pyr"/>
    <property type="match status" value="1"/>
</dbReference>
<dbReference type="SUPFAM" id="SSF52518">
    <property type="entry name" value="Thiamin diphosphate-binding fold (THDP-binding)"/>
    <property type="match status" value="2"/>
</dbReference>
<dbReference type="SUPFAM" id="SSF52922">
    <property type="entry name" value="TK C-terminal domain-like"/>
    <property type="match status" value="1"/>
</dbReference>
<dbReference type="PROSITE" id="PS00802">
    <property type="entry name" value="TRANSKETOLASE_2"/>
    <property type="match status" value="1"/>
</dbReference>
<feature type="chain" id="PRO_1000019065" description="1-deoxy-D-xylulose-5-phosphate synthase">
    <location>
        <begin position="1"/>
        <end position="631"/>
    </location>
</feature>
<feature type="binding site" evidence="1">
    <location>
        <position position="87"/>
    </location>
    <ligand>
        <name>thiamine diphosphate</name>
        <dbReference type="ChEBI" id="CHEBI:58937"/>
    </ligand>
</feature>
<feature type="binding site" evidence="1">
    <location>
        <begin position="128"/>
        <end position="130"/>
    </location>
    <ligand>
        <name>thiamine diphosphate</name>
        <dbReference type="ChEBI" id="CHEBI:58937"/>
    </ligand>
</feature>
<feature type="binding site" evidence="1">
    <location>
        <position position="159"/>
    </location>
    <ligand>
        <name>Mg(2+)</name>
        <dbReference type="ChEBI" id="CHEBI:18420"/>
    </ligand>
</feature>
<feature type="binding site" evidence="1">
    <location>
        <begin position="160"/>
        <end position="161"/>
    </location>
    <ligand>
        <name>thiamine diphosphate</name>
        <dbReference type="ChEBI" id="CHEBI:58937"/>
    </ligand>
</feature>
<feature type="binding site" evidence="1">
    <location>
        <position position="188"/>
    </location>
    <ligand>
        <name>Mg(2+)</name>
        <dbReference type="ChEBI" id="CHEBI:18420"/>
    </ligand>
</feature>
<feature type="binding site" evidence="1">
    <location>
        <position position="188"/>
    </location>
    <ligand>
        <name>thiamine diphosphate</name>
        <dbReference type="ChEBI" id="CHEBI:58937"/>
    </ligand>
</feature>
<feature type="binding site" evidence="1">
    <location>
        <position position="295"/>
    </location>
    <ligand>
        <name>thiamine diphosphate</name>
        <dbReference type="ChEBI" id="CHEBI:58937"/>
    </ligand>
</feature>
<feature type="binding site" evidence="1">
    <location>
        <position position="377"/>
    </location>
    <ligand>
        <name>thiamine diphosphate</name>
        <dbReference type="ChEBI" id="CHEBI:58937"/>
    </ligand>
</feature>
<name>DXS_PSEP1</name>
<protein>
    <recommendedName>
        <fullName evidence="1">1-deoxy-D-xylulose-5-phosphate synthase</fullName>
        <ecNumber evidence="1">2.2.1.7</ecNumber>
    </recommendedName>
    <alternativeName>
        <fullName evidence="1">1-deoxyxylulose-5-phosphate synthase</fullName>
        <shortName evidence="1">DXP synthase</shortName>
        <shortName evidence="1">DXPS</shortName>
    </alternativeName>
</protein>
<reference key="1">
    <citation type="submission" date="2007-05" db="EMBL/GenBank/DDBJ databases">
        <title>Complete sequence of Pseudomonas putida F1.</title>
        <authorList>
            <consortium name="US DOE Joint Genome Institute"/>
            <person name="Copeland A."/>
            <person name="Lucas S."/>
            <person name="Lapidus A."/>
            <person name="Barry K."/>
            <person name="Detter J.C."/>
            <person name="Glavina del Rio T."/>
            <person name="Hammon N."/>
            <person name="Israni S."/>
            <person name="Dalin E."/>
            <person name="Tice H."/>
            <person name="Pitluck S."/>
            <person name="Chain P."/>
            <person name="Malfatti S."/>
            <person name="Shin M."/>
            <person name="Vergez L."/>
            <person name="Schmutz J."/>
            <person name="Larimer F."/>
            <person name="Land M."/>
            <person name="Hauser L."/>
            <person name="Kyrpides N."/>
            <person name="Lykidis A."/>
            <person name="Parales R."/>
            <person name="Richardson P."/>
        </authorList>
    </citation>
    <scope>NUCLEOTIDE SEQUENCE [LARGE SCALE GENOMIC DNA]</scope>
    <source>
        <strain>ATCC 700007 / DSM 6899 / JCM 31910 / BCRC 17059 / LMG 24140 / F1</strain>
    </source>
</reference>